<sequence>MICKDDHSTLRARFRGFYPVVVDVETAGLDANINALLEIAVATFKMDEYGWLCVDGSLNFHIKSFPGAIIQPESLAFNGIDLNSPLRAAVTEQEALHEIFEMVRQGIKTQGCSRAIIVAHNAFFDHSFLMAAVERVSFMEKNPFHPFVMFDTATLSGLVFGQTVLAKACACAGVFFDKNKAHSALYDTERTAMLFCELVNKWKRLGGWPLTPCCIES</sequence>
<gene>
    <name evidence="1" type="primary">rnt</name>
    <name type="ordered locus">BPEN_379</name>
</gene>
<organism>
    <name type="scientific">Blochmanniella pennsylvanica (strain BPEN)</name>
    <dbReference type="NCBI Taxonomy" id="291272"/>
    <lineage>
        <taxon>Bacteria</taxon>
        <taxon>Pseudomonadati</taxon>
        <taxon>Pseudomonadota</taxon>
        <taxon>Gammaproteobacteria</taxon>
        <taxon>Enterobacterales</taxon>
        <taxon>Enterobacteriaceae</taxon>
        <taxon>ant endosymbionts</taxon>
        <taxon>Candidatus Blochmanniella</taxon>
    </lineage>
</organism>
<accession>Q492U0</accession>
<comment type="function">
    <text evidence="1">Trims short 3' overhangs of a variety of RNA species, leaving a one or two nucleotide 3' overhang. Responsible for the end-turnover of tRNA: specifically removes the terminal AMP residue from uncharged tRNA (tRNA-C-C-A). Also appears to be involved in tRNA biosynthesis.</text>
</comment>
<comment type="cofactor">
    <cofactor evidence="1">
        <name>Mg(2+)</name>
        <dbReference type="ChEBI" id="CHEBI:18420"/>
    </cofactor>
    <text evidence="1">Binds two Mg(2+) per subunit. The active form of the enzyme binds two Mg(2+) ions in its active site. The first Mg(2+) forms only one salt bridge with the protein.</text>
</comment>
<comment type="subunit">
    <text evidence="1">Homodimer.</text>
</comment>
<comment type="similarity">
    <text evidence="1">Belongs to the RNase T family.</text>
</comment>
<protein>
    <recommendedName>
        <fullName evidence="1">Ribonuclease T</fullName>
        <ecNumber evidence="1">3.1.13.-</ecNumber>
    </recommendedName>
    <alternativeName>
        <fullName evidence="1">Exoribonuclease T</fullName>
        <shortName evidence="1">RNase T</shortName>
    </alternativeName>
</protein>
<reference key="1">
    <citation type="journal article" date="2005" name="Genome Res.">
        <title>Genome sequence of Blochmannia pennsylvanicus indicates parallel evolutionary trends among bacterial mutualists of insects.</title>
        <authorList>
            <person name="Degnan P.H."/>
            <person name="Lazarus A.B."/>
            <person name="Wernegreen J.J."/>
        </authorList>
    </citation>
    <scope>NUCLEOTIDE SEQUENCE [LARGE SCALE GENOMIC DNA]</scope>
    <source>
        <strain>BPEN</strain>
    </source>
</reference>
<dbReference type="EC" id="3.1.13.-" evidence="1"/>
<dbReference type="EMBL" id="CP000016">
    <property type="protein sequence ID" value="AAZ41003.1"/>
    <property type="molecule type" value="Genomic_DNA"/>
</dbReference>
<dbReference type="RefSeq" id="WP_011282912.1">
    <property type="nucleotide sequence ID" value="NC_007292.1"/>
</dbReference>
<dbReference type="SMR" id="Q492U0"/>
<dbReference type="STRING" id="291272.BPEN_379"/>
<dbReference type="KEGG" id="bpn:BPEN_379"/>
<dbReference type="eggNOG" id="COG0847">
    <property type="taxonomic scope" value="Bacteria"/>
</dbReference>
<dbReference type="HOGENOM" id="CLU_082724_0_0_6"/>
<dbReference type="Proteomes" id="UP000007794">
    <property type="component" value="Chromosome"/>
</dbReference>
<dbReference type="GO" id="GO:0005829">
    <property type="term" value="C:cytosol"/>
    <property type="evidence" value="ECO:0007669"/>
    <property type="project" value="TreeGrafter"/>
</dbReference>
<dbReference type="GO" id="GO:0008408">
    <property type="term" value="F:3'-5' exonuclease activity"/>
    <property type="evidence" value="ECO:0007669"/>
    <property type="project" value="TreeGrafter"/>
</dbReference>
<dbReference type="GO" id="GO:0000287">
    <property type="term" value="F:magnesium ion binding"/>
    <property type="evidence" value="ECO:0007669"/>
    <property type="project" value="UniProtKB-UniRule"/>
</dbReference>
<dbReference type="GO" id="GO:0003676">
    <property type="term" value="F:nucleic acid binding"/>
    <property type="evidence" value="ECO:0007669"/>
    <property type="project" value="InterPro"/>
</dbReference>
<dbReference type="GO" id="GO:0016896">
    <property type="term" value="F:RNA exonuclease activity, producing 5'-phosphomonoesters"/>
    <property type="evidence" value="ECO:0007669"/>
    <property type="project" value="UniProtKB-UniRule"/>
</dbReference>
<dbReference type="GO" id="GO:0045004">
    <property type="term" value="P:DNA replication proofreading"/>
    <property type="evidence" value="ECO:0007669"/>
    <property type="project" value="TreeGrafter"/>
</dbReference>
<dbReference type="GO" id="GO:0008033">
    <property type="term" value="P:tRNA processing"/>
    <property type="evidence" value="ECO:0007669"/>
    <property type="project" value="UniProtKB-KW"/>
</dbReference>
<dbReference type="FunFam" id="3.30.420.10:FF:000009">
    <property type="entry name" value="Ribonuclease T"/>
    <property type="match status" value="1"/>
</dbReference>
<dbReference type="Gene3D" id="3.30.420.10">
    <property type="entry name" value="Ribonuclease H-like superfamily/Ribonuclease H"/>
    <property type="match status" value="1"/>
</dbReference>
<dbReference type="HAMAP" id="MF_00157">
    <property type="entry name" value="RNase_T"/>
    <property type="match status" value="1"/>
</dbReference>
<dbReference type="InterPro" id="IPR013520">
    <property type="entry name" value="Exonuclease_RNaseT/DNA_pol3"/>
</dbReference>
<dbReference type="InterPro" id="IPR005987">
    <property type="entry name" value="RNase_T"/>
</dbReference>
<dbReference type="InterPro" id="IPR012337">
    <property type="entry name" value="RNaseH-like_sf"/>
</dbReference>
<dbReference type="InterPro" id="IPR036397">
    <property type="entry name" value="RNaseH_sf"/>
</dbReference>
<dbReference type="NCBIfam" id="TIGR01298">
    <property type="entry name" value="RNaseT"/>
    <property type="match status" value="1"/>
</dbReference>
<dbReference type="PANTHER" id="PTHR30231">
    <property type="entry name" value="DNA POLYMERASE III SUBUNIT EPSILON"/>
    <property type="match status" value="1"/>
</dbReference>
<dbReference type="PANTHER" id="PTHR30231:SF2">
    <property type="entry name" value="RIBONUCLEASE T"/>
    <property type="match status" value="1"/>
</dbReference>
<dbReference type="Pfam" id="PF00929">
    <property type="entry name" value="RNase_T"/>
    <property type="match status" value="1"/>
</dbReference>
<dbReference type="SMART" id="SM00479">
    <property type="entry name" value="EXOIII"/>
    <property type="match status" value="1"/>
</dbReference>
<dbReference type="SUPFAM" id="SSF53098">
    <property type="entry name" value="Ribonuclease H-like"/>
    <property type="match status" value="1"/>
</dbReference>
<feature type="chain" id="PRO_1000011386" description="Ribonuclease T">
    <location>
        <begin position="1"/>
        <end position="217"/>
    </location>
</feature>
<feature type="domain" description="Exonuclease" evidence="1">
    <location>
        <begin position="20"/>
        <end position="195"/>
    </location>
</feature>
<feature type="active site" description="Proton donor/acceptor" evidence="1">
    <location>
        <position position="182"/>
    </location>
</feature>
<feature type="binding site" evidence="1">
    <location>
        <position position="23"/>
    </location>
    <ligand>
        <name>Mg(2+)</name>
        <dbReference type="ChEBI" id="CHEBI:18420"/>
        <label>1</label>
        <note>catalytic</note>
    </ligand>
</feature>
<feature type="binding site" evidence="1">
    <location>
        <position position="23"/>
    </location>
    <ligand>
        <name>Mg(2+)</name>
        <dbReference type="ChEBI" id="CHEBI:18420"/>
        <label>2</label>
        <note>catalytic</note>
    </ligand>
</feature>
<feature type="binding site" evidence="1">
    <location>
        <position position="25"/>
    </location>
    <ligand>
        <name>Mg(2+)</name>
        <dbReference type="ChEBI" id="CHEBI:18420"/>
        <label>2</label>
        <note>catalytic</note>
    </ligand>
</feature>
<feature type="binding site" evidence="1">
    <location>
        <position position="182"/>
    </location>
    <ligand>
        <name>Mg(2+)</name>
        <dbReference type="ChEBI" id="CHEBI:18420"/>
        <label>2</label>
        <note>catalytic</note>
    </ligand>
</feature>
<feature type="binding site" evidence="1">
    <location>
        <position position="187"/>
    </location>
    <ligand>
        <name>Mg(2+)</name>
        <dbReference type="ChEBI" id="CHEBI:18420"/>
        <label>2</label>
        <note>catalytic</note>
    </ligand>
</feature>
<feature type="site" description="Important for substrate binding and specificity" evidence="1">
    <location>
        <position position="77"/>
    </location>
</feature>
<feature type="site" description="Important for substrate binding and specificity" evidence="1">
    <location>
        <position position="124"/>
    </location>
</feature>
<feature type="site" description="Important for substrate binding and specificity" evidence="1">
    <location>
        <position position="147"/>
    </location>
</feature>
<name>RNT_BLOPB</name>
<proteinExistence type="inferred from homology"/>
<evidence type="ECO:0000255" key="1">
    <source>
        <dbReference type="HAMAP-Rule" id="MF_00157"/>
    </source>
</evidence>
<keyword id="KW-0269">Exonuclease</keyword>
<keyword id="KW-0378">Hydrolase</keyword>
<keyword id="KW-0460">Magnesium</keyword>
<keyword id="KW-0479">Metal-binding</keyword>
<keyword id="KW-0540">Nuclease</keyword>
<keyword id="KW-1185">Reference proteome</keyword>
<keyword id="KW-0819">tRNA processing</keyword>